<dbReference type="EMBL" id="CR382133">
    <property type="protein sequence ID" value="CAG84582.1"/>
    <property type="molecule type" value="Genomic_DNA"/>
</dbReference>
<dbReference type="RefSeq" id="XP_456626.1">
    <property type="nucleotide sequence ID" value="XM_456626.1"/>
</dbReference>
<dbReference type="SMR" id="Q6BYU3"/>
<dbReference type="FunCoup" id="Q6BYU3">
    <property type="interactions" value="42"/>
</dbReference>
<dbReference type="STRING" id="284592.Q6BYU3"/>
<dbReference type="GeneID" id="2899821"/>
<dbReference type="KEGG" id="dha:DEHA2A06930g"/>
<dbReference type="VEuPathDB" id="FungiDB:DEHA2A06930g"/>
<dbReference type="eggNOG" id="KOG4253">
    <property type="taxonomic scope" value="Eukaryota"/>
</dbReference>
<dbReference type="HOGENOM" id="CLU_089418_2_0_1"/>
<dbReference type="InParanoid" id="Q6BYU3"/>
<dbReference type="OMA" id="AEWIISF"/>
<dbReference type="OrthoDB" id="69461at2759"/>
<dbReference type="Proteomes" id="UP000000599">
    <property type="component" value="Chromosome A"/>
</dbReference>
<dbReference type="GO" id="GO:0005789">
    <property type="term" value="C:endoplasmic reticulum membrane"/>
    <property type="evidence" value="ECO:0007669"/>
    <property type="project" value="UniProtKB-SubCell"/>
</dbReference>
<dbReference type="GO" id="GO:0043529">
    <property type="term" value="C:GET complex"/>
    <property type="evidence" value="ECO:0007669"/>
    <property type="project" value="UniProtKB-UniRule"/>
</dbReference>
<dbReference type="GO" id="GO:0000139">
    <property type="term" value="C:Golgi membrane"/>
    <property type="evidence" value="ECO:0007669"/>
    <property type="project" value="UniProtKB-SubCell"/>
</dbReference>
<dbReference type="GO" id="GO:0043495">
    <property type="term" value="F:protein-membrane adaptor activity"/>
    <property type="evidence" value="ECO:0007669"/>
    <property type="project" value="TreeGrafter"/>
</dbReference>
<dbReference type="GO" id="GO:0071816">
    <property type="term" value="P:tail-anchored membrane protein insertion into ER membrane"/>
    <property type="evidence" value="ECO:0007669"/>
    <property type="project" value="InterPro"/>
</dbReference>
<dbReference type="GO" id="GO:0016192">
    <property type="term" value="P:vesicle-mediated transport"/>
    <property type="evidence" value="ECO:0007669"/>
    <property type="project" value="UniProtKB-KW"/>
</dbReference>
<dbReference type="Gene3D" id="1.10.287.660">
    <property type="entry name" value="Helix hairpin bin"/>
    <property type="match status" value="1"/>
</dbReference>
<dbReference type="HAMAP" id="MF_03113">
    <property type="entry name" value="Get1"/>
    <property type="match status" value="1"/>
</dbReference>
<dbReference type="InterPro" id="IPR028945">
    <property type="entry name" value="Get1"/>
</dbReference>
<dbReference type="InterPro" id="IPR027538">
    <property type="entry name" value="Get1_fungi"/>
</dbReference>
<dbReference type="InterPro" id="IPR029012">
    <property type="entry name" value="Helix_hairpin_bin_sf"/>
</dbReference>
<dbReference type="PANTHER" id="PTHR42650:SF1">
    <property type="entry name" value="GUIDED ENTRY OF TAIL-ANCHORED PROTEINS FACTOR 1"/>
    <property type="match status" value="1"/>
</dbReference>
<dbReference type="PANTHER" id="PTHR42650">
    <property type="entry name" value="TAIL-ANCHORED PROTEIN INSERTION RECEPTOR WRB"/>
    <property type="match status" value="1"/>
</dbReference>
<dbReference type="Pfam" id="PF04420">
    <property type="entry name" value="CHD5"/>
    <property type="match status" value="1"/>
</dbReference>
<keyword id="KW-0175">Coiled coil</keyword>
<keyword id="KW-0256">Endoplasmic reticulum</keyword>
<keyword id="KW-0931">ER-Golgi transport</keyword>
<keyword id="KW-0333">Golgi apparatus</keyword>
<keyword id="KW-0472">Membrane</keyword>
<keyword id="KW-1185">Reference proteome</keyword>
<keyword id="KW-0812">Transmembrane</keyword>
<keyword id="KW-1133">Transmembrane helix</keyword>
<keyword id="KW-0813">Transport</keyword>
<organism>
    <name type="scientific">Debaryomyces hansenii (strain ATCC 36239 / CBS 767 / BCRC 21394 / JCM 1990 / NBRC 0083 / IGC 2968)</name>
    <name type="common">Yeast</name>
    <name type="synonym">Torulaspora hansenii</name>
    <dbReference type="NCBI Taxonomy" id="284592"/>
    <lineage>
        <taxon>Eukaryota</taxon>
        <taxon>Fungi</taxon>
        <taxon>Dikarya</taxon>
        <taxon>Ascomycota</taxon>
        <taxon>Saccharomycotina</taxon>
        <taxon>Pichiomycetes</taxon>
        <taxon>Debaryomycetaceae</taxon>
        <taxon>Debaryomyces</taxon>
    </lineage>
</organism>
<sequence length="216" mass="24362">MFDISSSNLLISVLVVLFAKQLINAVGKATLENIGWSAYCKVAPKLGDSKFIALDQKNVELAKVSKERKSISAQDQYARWTKLNRQFDKLTGEINKLKEETSASRSYISKYIGYMILVTTTLPIWFFRVWFRKAVLFYFPTGVLPHYLEWFLALPFITTGGVGLTIWMSAVNNVVSSVIFLVKFPFEKEVPFPSKEVGNEKTSINKEEVSGTPAAN</sequence>
<gene>
    <name evidence="1" type="primary">GET1</name>
    <name type="ordered locus">DEHA2A06930g</name>
</gene>
<reference key="1">
    <citation type="journal article" date="2004" name="Nature">
        <title>Genome evolution in yeasts.</title>
        <authorList>
            <person name="Dujon B."/>
            <person name="Sherman D."/>
            <person name="Fischer G."/>
            <person name="Durrens P."/>
            <person name="Casaregola S."/>
            <person name="Lafontaine I."/>
            <person name="de Montigny J."/>
            <person name="Marck C."/>
            <person name="Neuveglise C."/>
            <person name="Talla E."/>
            <person name="Goffard N."/>
            <person name="Frangeul L."/>
            <person name="Aigle M."/>
            <person name="Anthouard V."/>
            <person name="Babour A."/>
            <person name="Barbe V."/>
            <person name="Barnay S."/>
            <person name="Blanchin S."/>
            <person name="Beckerich J.-M."/>
            <person name="Beyne E."/>
            <person name="Bleykasten C."/>
            <person name="Boisrame A."/>
            <person name="Boyer J."/>
            <person name="Cattolico L."/>
            <person name="Confanioleri F."/>
            <person name="de Daruvar A."/>
            <person name="Despons L."/>
            <person name="Fabre E."/>
            <person name="Fairhead C."/>
            <person name="Ferry-Dumazet H."/>
            <person name="Groppi A."/>
            <person name="Hantraye F."/>
            <person name="Hennequin C."/>
            <person name="Jauniaux N."/>
            <person name="Joyet P."/>
            <person name="Kachouri R."/>
            <person name="Kerrest A."/>
            <person name="Koszul R."/>
            <person name="Lemaire M."/>
            <person name="Lesur I."/>
            <person name="Ma L."/>
            <person name="Muller H."/>
            <person name="Nicaud J.-M."/>
            <person name="Nikolski M."/>
            <person name="Oztas S."/>
            <person name="Ozier-Kalogeropoulos O."/>
            <person name="Pellenz S."/>
            <person name="Potier S."/>
            <person name="Richard G.-F."/>
            <person name="Straub M.-L."/>
            <person name="Suleau A."/>
            <person name="Swennen D."/>
            <person name="Tekaia F."/>
            <person name="Wesolowski-Louvel M."/>
            <person name="Westhof E."/>
            <person name="Wirth B."/>
            <person name="Zeniou-Meyer M."/>
            <person name="Zivanovic Y."/>
            <person name="Bolotin-Fukuhara M."/>
            <person name="Thierry A."/>
            <person name="Bouchier C."/>
            <person name="Caudron B."/>
            <person name="Scarpelli C."/>
            <person name="Gaillardin C."/>
            <person name="Weissenbach J."/>
            <person name="Wincker P."/>
            <person name="Souciet J.-L."/>
        </authorList>
    </citation>
    <scope>NUCLEOTIDE SEQUENCE [LARGE SCALE GENOMIC DNA]</scope>
    <source>
        <strain>ATCC 36239 / CBS 767 / BCRC 21394 / JCM 1990 / NBRC 0083 / IGC 2968</strain>
    </source>
</reference>
<protein>
    <recommendedName>
        <fullName evidence="1">Golgi to ER traffic protein 1</fullName>
    </recommendedName>
    <alternativeName>
        <fullName evidence="1">Guided entry of tail-anchored proteins 1</fullName>
    </alternativeName>
</protein>
<feature type="chain" id="PRO_0000388593" description="Golgi to ER traffic protein 1">
    <location>
        <begin position="1"/>
        <end position="216"/>
    </location>
</feature>
<feature type="topological domain" description="Lumenal" evidence="1">
    <location>
        <begin position="1"/>
        <end position="9"/>
    </location>
</feature>
<feature type="transmembrane region" description="Helical" evidence="1">
    <location>
        <begin position="10"/>
        <end position="29"/>
    </location>
</feature>
<feature type="topological domain" description="Cytoplasmic" evidence="1">
    <location>
        <begin position="30"/>
        <end position="116"/>
    </location>
</feature>
<feature type="transmembrane region" description="Helical" evidence="1">
    <location>
        <begin position="117"/>
        <end position="137"/>
    </location>
</feature>
<feature type="topological domain" description="Lumenal" evidence="1">
    <location>
        <begin position="138"/>
        <end position="161"/>
    </location>
</feature>
<feature type="transmembrane region" description="Helical" evidence="1">
    <location>
        <begin position="162"/>
        <end position="178"/>
    </location>
</feature>
<feature type="topological domain" description="Cytoplasmic" evidence="1">
    <location>
        <begin position="179"/>
        <end position="216"/>
    </location>
</feature>
<feature type="region of interest" description="Disordered" evidence="2">
    <location>
        <begin position="193"/>
        <end position="216"/>
    </location>
</feature>
<feature type="coiled-coil region" evidence="1">
    <location>
        <begin position="54"/>
        <end position="105"/>
    </location>
</feature>
<feature type="compositionally biased region" description="Basic and acidic residues" evidence="2">
    <location>
        <begin position="197"/>
        <end position="209"/>
    </location>
</feature>
<accession>Q6BYU3</accession>
<comment type="function">
    <text evidence="1">Required for the post-translational delivery of tail-anchored (TA) proteins to the endoplasmic reticulum. Together with GET2, acts as a membrane receptor for soluble GET3, which recognizes and selectively binds the transmembrane domain of TA proteins in the cytosol. The GET complex cooperates with the HDEL receptor ERD2 to mediate the ATP-dependent retrieval of resident ER proteins that contain a C-terminal H-D-E-L retention signal from the Golgi to the ER.</text>
</comment>
<comment type="subunit">
    <text evidence="1">Component of the Golgi to ER traffic (GET) complex, which is composed of GET1, GET2 and GET3. Within the complex, GET1 and GET2 form a heterotetramer which is stabilized by phosphatidylinositol binding and which binds to the GET3 homodimer.</text>
</comment>
<comment type="subcellular location">
    <subcellularLocation>
        <location evidence="1">Endoplasmic reticulum membrane</location>
        <topology evidence="1">Multi-pass membrane protein</topology>
    </subcellularLocation>
    <subcellularLocation>
        <location evidence="1">Golgi apparatus membrane</location>
        <topology evidence="1">Multi-pass membrane protein</topology>
    </subcellularLocation>
</comment>
<comment type="similarity">
    <text evidence="1">Belongs to the WRB/GET1 family.</text>
</comment>
<name>GET1_DEBHA</name>
<evidence type="ECO:0000255" key="1">
    <source>
        <dbReference type="HAMAP-Rule" id="MF_03113"/>
    </source>
</evidence>
<evidence type="ECO:0000256" key="2">
    <source>
        <dbReference type="SAM" id="MobiDB-lite"/>
    </source>
</evidence>
<proteinExistence type="inferred from homology"/>